<accession>A9N735</accession>
<sequence>MTTILKHLPAGQRIGIAFSGGLDTSAALLWMRQKGAVPYAYTANLGQPDEDDYDAIPRRAMEYGAENARLIDCRKQLVAEGIAAIQCGAFHNTTGGLTYFNTTPLGRAVTGTMLVAAMKEDGVNIWGDGSTYKGNDIERFYRYGLLTNAELQIYKPWLDTDFIDELGGRHEMSEFMIACGFDYKMSVEKAYSTDSNMLGATHEAKDLEFLNSSVKIVNPIMGVKFWDESVKIPAEVVTVRFEQGHPVALNGKTFSDDVEMMLEANRIGGRHGLGMSDQIENRIIEAKSRGIYEAPGMALLHIAYERLLTGIHNEDTIEQYHSHGRQLGKLLYQGRWFDSQALMLRDGLQRWVASQITGEVTLELRRGNDYSILNTVSDNLTYKPERLTMEKGDSVFSPDDRIGQLTMRNLDITDTREKLFGYAKAGLLTASSATGLPQVENLENKAK</sequence>
<gene>
    <name evidence="1" type="primary">argG</name>
    <name type="ordered locus">SPAB_04102</name>
</gene>
<organism>
    <name type="scientific">Salmonella paratyphi B (strain ATCC BAA-1250 / SPB7)</name>
    <dbReference type="NCBI Taxonomy" id="1016998"/>
    <lineage>
        <taxon>Bacteria</taxon>
        <taxon>Pseudomonadati</taxon>
        <taxon>Pseudomonadota</taxon>
        <taxon>Gammaproteobacteria</taxon>
        <taxon>Enterobacterales</taxon>
        <taxon>Enterobacteriaceae</taxon>
        <taxon>Salmonella</taxon>
    </lineage>
</organism>
<proteinExistence type="inferred from homology"/>
<evidence type="ECO:0000255" key="1">
    <source>
        <dbReference type="HAMAP-Rule" id="MF_00581"/>
    </source>
</evidence>
<keyword id="KW-0028">Amino-acid biosynthesis</keyword>
<keyword id="KW-0055">Arginine biosynthesis</keyword>
<keyword id="KW-0067">ATP-binding</keyword>
<keyword id="KW-0963">Cytoplasm</keyword>
<keyword id="KW-0436">Ligase</keyword>
<keyword id="KW-0547">Nucleotide-binding</keyword>
<dbReference type="EC" id="6.3.4.5" evidence="1"/>
<dbReference type="EMBL" id="CP000886">
    <property type="protein sequence ID" value="ABX69427.1"/>
    <property type="molecule type" value="Genomic_DNA"/>
</dbReference>
<dbReference type="SMR" id="A9N735"/>
<dbReference type="KEGG" id="spq:SPAB_04102"/>
<dbReference type="PATRIC" id="fig|1016998.12.peg.3864"/>
<dbReference type="HOGENOM" id="CLU_032784_4_1_6"/>
<dbReference type="UniPathway" id="UPA00068">
    <property type="reaction ID" value="UER00113"/>
</dbReference>
<dbReference type="Proteomes" id="UP000008556">
    <property type="component" value="Chromosome"/>
</dbReference>
<dbReference type="GO" id="GO:0005737">
    <property type="term" value="C:cytoplasm"/>
    <property type="evidence" value="ECO:0007669"/>
    <property type="project" value="UniProtKB-SubCell"/>
</dbReference>
<dbReference type="GO" id="GO:0004055">
    <property type="term" value="F:argininosuccinate synthase activity"/>
    <property type="evidence" value="ECO:0007669"/>
    <property type="project" value="UniProtKB-UniRule"/>
</dbReference>
<dbReference type="GO" id="GO:0005524">
    <property type="term" value="F:ATP binding"/>
    <property type="evidence" value="ECO:0007669"/>
    <property type="project" value="UniProtKB-UniRule"/>
</dbReference>
<dbReference type="GO" id="GO:0042803">
    <property type="term" value="F:protein homodimerization activity"/>
    <property type="evidence" value="ECO:0007669"/>
    <property type="project" value="InterPro"/>
</dbReference>
<dbReference type="GO" id="GO:0000053">
    <property type="term" value="P:argininosuccinate metabolic process"/>
    <property type="evidence" value="ECO:0007669"/>
    <property type="project" value="TreeGrafter"/>
</dbReference>
<dbReference type="GO" id="GO:0006526">
    <property type="term" value="P:L-arginine biosynthetic process"/>
    <property type="evidence" value="ECO:0007669"/>
    <property type="project" value="UniProtKB-UniRule"/>
</dbReference>
<dbReference type="GO" id="GO:0000050">
    <property type="term" value="P:urea cycle"/>
    <property type="evidence" value="ECO:0007669"/>
    <property type="project" value="TreeGrafter"/>
</dbReference>
<dbReference type="CDD" id="cd01999">
    <property type="entry name" value="ASS"/>
    <property type="match status" value="1"/>
</dbReference>
<dbReference type="FunFam" id="1.10.287.400:FF:000001">
    <property type="entry name" value="Argininosuccinate synthase"/>
    <property type="match status" value="1"/>
</dbReference>
<dbReference type="Gene3D" id="1.10.287.400">
    <property type="match status" value="1"/>
</dbReference>
<dbReference type="Gene3D" id="3.90.1260.10">
    <property type="entry name" value="Argininosuccinate synthetase, chain A, domain 2"/>
    <property type="match status" value="1"/>
</dbReference>
<dbReference type="Gene3D" id="3.40.50.620">
    <property type="entry name" value="HUPs"/>
    <property type="match status" value="1"/>
</dbReference>
<dbReference type="HAMAP" id="MF_00581">
    <property type="entry name" value="Arg_succ_synth_type2"/>
    <property type="match status" value="1"/>
</dbReference>
<dbReference type="InterPro" id="IPR023437">
    <property type="entry name" value="Arg_succ_synth_type2_subfam"/>
</dbReference>
<dbReference type="InterPro" id="IPR048268">
    <property type="entry name" value="Arginosuc_syn_C"/>
</dbReference>
<dbReference type="InterPro" id="IPR048267">
    <property type="entry name" value="Arginosuc_syn_N"/>
</dbReference>
<dbReference type="InterPro" id="IPR001518">
    <property type="entry name" value="Arginosuc_synth"/>
</dbReference>
<dbReference type="InterPro" id="IPR018223">
    <property type="entry name" value="Arginosuc_synth_CS"/>
</dbReference>
<dbReference type="InterPro" id="IPR023434">
    <property type="entry name" value="Arginosuc_synth_type_1_subfam"/>
</dbReference>
<dbReference type="InterPro" id="IPR024074">
    <property type="entry name" value="AS_cat/multimer_dom_body"/>
</dbReference>
<dbReference type="InterPro" id="IPR024073">
    <property type="entry name" value="AS_multimer_C_tail"/>
</dbReference>
<dbReference type="InterPro" id="IPR014729">
    <property type="entry name" value="Rossmann-like_a/b/a_fold"/>
</dbReference>
<dbReference type="NCBIfam" id="TIGR00032">
    <property type="entry name" value="argG"/>
    <property type="match status" value="1"/>
</dbReference>
<dbReference type="NCBIfam" id="NF003779">
    <property type="entry name" value="PRK05370.1"/>
    <property type="match status" value="1"/>
</dbReference>
<dbReference type="PANTHER" id="PTHR11587">
    <property type="entry name" value="ARGININOSUCCINATE SYNTHASE"/>
    <property type="match status" value="1"/>
</dbReference>
<dbReference type="PANTHER" id="PTHR11587:SF2">
    <property type="entry name" value="ARGININOSUCCINATE SYNTHASE"/>
    <property type="match status" value="1"/>
</dbReference>
<dbReference type="Pfam" id="PF20979">
    <property type="entry name" value="Arginosuc_syn_C"/>
    <property type="match status" value="1"/>
</dbReference>
<dbReference type="Pfam" id="PF00764">
    <property type="entry name" value="Arginosuc_synth"/>
    <property type="match status" value="1"/>
</dbReference>
<dbReference type="SUPFAM" id="SSF52402">
    <property type="entry name" value="Adenine nucleotide alpha hydrolases-like"/>
    <property type="match status" value="1"/>
</dbReference>
<dbReference type="SUPFAM" id="SSF69864">
    <property type="entry name" value="Argininosuccinate synthetase, C-terminal domain"/>
    <property type="match status" value="1"/>
</dbReference>
<dbReference type="PROSITE" id="PS00564">
    <property type="entry name" value="ARGININOSUCCIN_SYN_1"/>
    <property type="match status" value="1"/>
</dbReference>
<dbReference type="PROSITE" id="PS00565">
    <property type="entry name" value="ARGININOSUCCIN_SYN_2"/>
    <property type="match status" value="1"/>
</dbReference>
<feature type="chain" id="PRO_1000082405" description="Argininosuccinate synthase">
    <location>
        <begin position="1"/>
        <end position="447"/>
    </location>
</feature>
<feature type="binding site" evidence="1">
    <location>
        <begin position="17"/>
        <end position="25"/>
    </location>
    <ligand>
        <name>ATP</name>
        <dbReference type="ChEBI" id="CHEBI:30616"/>
    </ligand>
</feature>
<feature type="binding site" evidence="1">
    <location>
        <position position="43"/>
    </location>
    <ligand>
        <name>ATP</name>
        <dbReference type="ChEBI" id="CHEBI:30616"/>
    </ligand>
</feature>
<feature type="binding site" evidence="1">
    <location>
        <position position="99"/>
    </location>
    <ligand>
        <name>L-citrulline</name>
        <dbReference type="ChEBI" id="CHEBI:57743"/>
    </ligand>
</feature>
<feature type="binding site" evidence="1">
    <location>
        <position position="129"/>
    </location>
    <ligand>
        <name>ATP</name>
        <dbReference type="ChEBI" id="CHEBI:30616"/>
    </ligand>
</feature>
<feature type="binding site" evidence="1">
    <location>
        <position position="131"/>
    </location>
    <ligand>
        <name>ATP</name>
        <dbReference type="ChEBI" id="CHEBI:30616"/>
    </ligand>
</feature>
<feature type="binding site" evidence="1">
    <location>
        <position position="131"/>
    </location>
    <ligand>
        <name>L-aspartate</name>
        <dbReference type="ChEBI" id="CHEBI:29991"/>
    </ligand>
</feature>
<feature type="binding site" evidence="1">
    <location>
        <position position="135"/>
    </location>
    <ligand>
        <name>L-aspartate</name>
        <dbReference type="ChEBI" id="CHEBI:29991"/>
    </ligand>
</feature>
<feature type="binding site" evidence="1">
    <location>
        <position position="135"/>
    </location>
    <ligand>
        <name>L-citrulline</name>
        <dbReference type="ChEBI" id="CHEBI:57743"/>
    </ligand>
</feature>
<feature type="binding site" evidence="1">
    <location>
        <position position="136"/>
    </location>
    <ligand>
        <name>ATP</name>
        <dbReference type="ChEBI" id="CHEBI:30616"/>
    </ligand>
</feature>
<feature type="binding site" evidence="1">
    <location>
        <position position="136"/>
    </location>
    <ligand>
        <name>L-aspartate</name>
        <dbReference type="ChEBI" id="CHEBI:29991"/>
    </ligand>
</feature>
<feature type="binding site" evidence="1">
    <location>
        <position position="139"/>
    </location>
    <ligand>
        <name>L-citrulline</name>
        <dbReference type="ChEBI" id="CHEBI:57743"/>
    </ligand>
</feature>
<feature type="binding site" evidence="1">
    <location>
        <position position="192"/>
    </location>
    <ligand>
        <name>L-citrulline</name>
        <dbReference type="ChEBI" id="CHEBI:57743"/>
    </ligand>
</feature>
<feature type="binding site" evidence="1">
    <location>
        <position position="194"/>
    </location>
    <ligand>
        <name>ATP</name>
        <dbReference type="ChEBI" id="CHEBI:30616"/>
    </ligand>
</feature>
<feature type="binding site" evidence="1">
    <location>
        <position position="201"/>
    </location>
    <ligand>
        <name>L-citrulline</name>
        <dbReference type="ChEBI" id="CHEBI:57743"/>
    </ligand>
</feature>
<feature type="binding site" evidence="1">
    <location>
        <position position="203"/>
    </location>
    <ligand>
        <name>L-citrulline</name>
        <dbReference type="ChEBI" id="CHEBI:57743"/>
    </ligand>
</feature>
<feature type="binding site" evidence="1">
    <location>
        <position position="280"/>
    </location>
    <ligand>
        <name>L-citrulline</name>
        <dbReference type="ChEBI" id="CHEBI:57743"/>
    </ligand>
</feature>
<reference key="1">
    <citation type="submission" date="2007-11" db="EMBL/GenBank/DDBJ databases">
        <authorList>
            <consortium name="The Salmonella enterica serovar Paratyphi B Genome Sequencing Project"/>
            <person name="McClelland M."/>
            <person name="Sanderson E.K."/>
            <person name="Porwollik S."/>
            <person name="Spieth J."/>
            <person name="Clifton W.S."/>
            <person name="Fulton R."/>
            <person name="Cordes M."/>
            <person name="Wollam A."/>
            <person name="Shah N."/>
            <person name="Pepin K."/>
            <person name="Bhonagiri V."/>
            <person name="Nash W."/>
            <person name="Johnson M."/>
            <person name="Thiruvilangam P."/>
            <person name="Wilson R."/>
        </authorList>
    </citation>
    <scope>NUCLEOTIDE SEQUENCE [LARGE SCALE GENOMIC DNA]</scope>
    <source>
        <strain>ATCC BAA-1250 / SPB7</strain>
    </source>
</reference>
<comment type="catalytic activity">
    <reaction evidence="1">
        <text>L-citrulline + L-aspartate + ATP = 2-(N(omega)-L-arginino)succinate + AMP + diphosphate + H(+)</text>
        <dbReference type="Rhea" id="RHEA:10932"/>
        <dbReference type="ChEBI" id="CHEBI:15378"/>
        <dbReference type="ChEBI" id="CHEBI:29991"/>
        <dbReference type="ChEBI" id="CHEBI:30616"/>
        <dbReference type="ChEBI" id="CHEBI:33019"/>
        <dbReference type="ChEBI" id="CHEBI:57472"/>
        <dbReference type="ChEBI" id="CHEBI:57743"/>
        <dbReference type="ChEBI" id="CHEBI:456215"/>
        <dbReference type="EC" id="6.3.4.5"/>
    </reaction>
</comment>
<comment type="pathway">
    <text evidence="1">Amino-acid biosynthesis; L-arginine biosynthesis; L-arginine from L-ornithine and carbamoyl phosphate: step 2/3.</text>
</comment>
<comment type="subunit">
    <text evidence="1">Homotetramer.</text>
</comment>
<comment type="subcellular location">
    <subcellularLocation>
        <location evidence="1">Cytoplasm</location>
    </subcellularLocation>
</comment>
<comment type="similarity">
    <text evidence="1">Belongs to the argininosuccinate synthase family. Type 2 subfamily.</text>
</comment>
<protein>
    <recommendedName>
        <fullName evidence="1">Argininosuccinate synthase</fullName>
        <ecNumber evidence="1">6.3.4.5</ecNumber>
    </recommendedName>
    <alternativeName>
        <fullName evidence="1">Citrulline--aspartate ligase</fullName>
    </alternativeName>
</protein>
<name>ASSY_SALPB</name>